<name>NDHH_LOTJA</name>
<accession>Q9BBN8</accession>
<protein>
    <recommendedName>
        <fullName evidence="1">NAD(P)H-quinone oxidoreductase subunit H, chloroplastic</fullName>
        <ecNumber evidence="1">7.1.1.-</ecNumber>
    </recommendedName>
    <alternativeName>
        <fullName>NAD(P)H dehydrogenase subunit H</fullName>
    </alternativeName>
    <alternativeName>
        <fullName evidence="1">NADH-plastoquinone oxidoreductase 49 kDa subunit</fullName>
    </alternativeName>
    <alternativeName>
        <fullName evidence="1">NADH-plastoquinone oxidoreductase subunit H</fullName>
    </alternativeName>
</protein>
<dbReference type="EC" id="7.1.1.-" evidence="1"/>
<dbReference type="EMBL" id="AP002983">
    <property type="protein sequence ID" value="BAB33251.1"/>
    <property type="molecule type" value="Genomic_DNA"/>
</dbReference>
<dbReference type="RefSeq" id="NP_084851.1">
    <property type="nucleotide sequence ID" value="NC_002694.1"/>
</dbReference>
<dbReference type="SMR" id="Q9BBN8"/>
<dbReference type="ProMEX" id="Q9BBN8"/>
<dbReference type="GeneID" id="802847"/>
<dbReference type="OMA" id="TRMDYLT"/>
<dbReference type="GO" id="GO:0009535">
    <property type="term" value="C:chloroplast thylakoid membrane"/>
    <property type="evidence" value="ECO:0007669"/>
    <property type="project" value="UniProtKB-SubCell"/>
</dbReference>
<dbReference type="GO" id="GO:0051287">
    <property type="term" value="F:NAD binding"/>
    <property type="evidence" value="ECO:0007669"/>
    <property type="project" value="InterPro"/>
</dbReference>
<dbReference type="GO" id="GO:0016655">
    <property type="term" value="F:oxidoreductase activity, acting on NAD(P)H, quinone or similar compound as acceptor"/>
    <property type="evidence" value="ECO:0007669"/>
    <property type="project" value="UniProtKB-UniRule"/>
</dbReference>
<dbReference type="GO" id="GO:0048038">
    <property type="term" value="F:quinone binding"/>
    <property type="evidence" value="ECO:0007669"/>
    <property type="project" value="UniProtKB-KW"/>
</dbReference>
<dbReference type="GO" id="GO:0019684">
    <property type="term" value="P:photosynthesis, light reaction"/>
    <property type="evidence" value="ECO:0007669"/>
    <property type="project" value="UniProtKB-UniRule"/>
</dbReference>
<dbReference type="FunFam" id="1.10.645.10:FF:000003">
    <property type="entry name" value="NAD(P)H-quinone oxidoreductase subunit H, chloroplastic"/>
    <property type="match status" value="1"/>
</dbReference>
<dbReference type="Gene3D" id="1.10.645.10">
    <property type="entry name" value="Cytochrome-c3 Hydrogenase, chain B"/>
    <property type="match status" value="1"/>
</dbReference>
<dbReference type="HAMAP" id="MF_01358">
    <property type="entry name" value="NDH1_NuoD"/>
    <property type="match status" value="1"/>
</dbReference>
<dbReference type="InterPro" id="IPR001135">
    <property type="entry name" value="NADH_Q_OxRdtase_suD"/>
</dbReference>
<dbReference type="InterPro" id="IPR014029">
    <property type="entry name" value="NADH_UbQ_OxRdtase_49kDa_CS"/>
</dbReference>
<dbReference type="InterPro" id="IPR022885">
    <property type="entry name" value="NDH1_su_D/H"/>
</dbReference>
<dbReference type="InterPro" id="IPR029014">
    <property type="entry name" value="NiFe-Hase_large"/>
</dbReference>
<dbReference type="NCBIfam" id="NF004739">
    <property type="entry name" value="PRK06075.1"/>
    <property type="match status" value="1"/>
</dbReference>
<dbReference type="NCBIfam" id="NF005649">
    <property type="entry name" value="PRK07415.1"/>
    <property type="match status" value="1"/>
</dbReference>
<dbReference type="PANTHER" id="PTHR11993:SF10">
    <property type="entry name" value="NADH DEHYDROGENASE [UBIQUINONE] IRON-SULFUR PROTEIN 2, MITOCHONDRIAL"/>
    <property type="match status" value="1"/>
</dbReference>
<dbReference type="PANTHER" id="PTHR11993">
    <property type="entry name" value="NADH-UBIQUINONE OXIDOREDUCTASE 49 KDA SUBUNIT"/>
    <property type="match status" value="1"/>
</dbReference>
<dbReference type="Pfam" id="PF00346">
    <property type="entry name" value="Complex1_49kDa"/>
    <property type="match status" value="1"/>
</dbReference>
<dbReference type="SUPFAM" id="SSF56762">
    <property type="entry name" value="HydB/Nqo4-like"/>
    <property type="match status" value="1"/>
</dbReference>
<dbReference type="PROSITE" id="PS00535">
    <property type="entry name" value="COMPLEX1_49K"/>
    <property type="match status" value="1"/>
</dbReference>
<geneLocation type="chloroplast"/>
<sequence>MNVPATRKDLMIVNMGPHHPSMHGVLRLIVTLDGEDVIDCEPILGYLHRGMEKIAENRTIIQYLPYVTRWDYLATMFTEAITVNGPEQLGNIQVPKRASYIRVIMLELSRIASHLLWLGPFMADIGAQTPFFYIFREREFIYDLFEAATGMRMMHNFFRIGGVAADLPHGWIDKCFDFCNYFFTRVVEYQKLITRNPIFLERVEGVGVVGGEEVINWGLSGPMLRASGIQWDLRQVDNYECYEEFDWEVQWQKEGDSLARYLVRIGEMMESIKIIQQALEGIPGGPYENLEIRCFGREKEPEWNDFEYRFIGKKPSPTFELPKQELYVRVEAPKGELGIFLIGDQNGFPWRWKIRPPGFINLQILPQLVKRMKLADIMTILGSIDIIMGEVDR</sequence>
<reference key="1">
    <citation type="journal article" date="2000" name="DNA Res.">
        <title>Complete structure of the chloroplast genome of a legume, Lotus japonicus.</title>
        <authorList>
            <person name="Kato T."/>
            <person name="Kaneko T."/>
            <person name="Sato S."/>
            <person name="Nakamura Y."/>
            <person name="Tabata S."/>
        </authorList>
    </citation>
    <scope>NUCLEOTIDE SEQUENCE [LARGE SCALE GENOMIC DNA]</scope>
    <source>
        <strain>cv. Miyakojima MG-20</strain>
    </source>
</reference>
<keyword id="KW-0150">Chloroplast</keyword>
<keyword id="KW-0472">Membrane</keyword>
<keyword id="KW-0520">NAD</keyword>
<keyword id="KW-0521">NADP</keyword>
<keyword id="KW-0934">Plastid</keyword>
<keyword id="KW-0618">Plastoquinone</keyword>
<keyword id="KW-0874">Quinone</keyword>
<keyword id="KW-0793">Thylakoid</keyword>
<keyword id="KW-1278">Translocase</keyword>
<keyword id="KW-0813">Transport</keyword>
<feature type="chain" id="PRO_0000118601" description="NAD(P)H-quinone oxidoreductase subunit H, chloroplastic">
    <location>
        <begin position="1"/>
        <end position="393"/>
    </location>
</feature>
<proteinExistence type="inferred from homology"/>
<evidence type="ECO:0000255" key="1">
    <source>
        <dbReference type="HAMAP-Rule" id="MF_01358"/>
    </source>
</evidence>
<gene>
    <name evidence="1" type="primary">ndhH</name>
</gene>
<organism>
    <name type="scientific">Lotus japonicus</name>
    <name type="common">Lotus corniculatus var. japonicus</name>
    <dbReference type="NCBI Taxonomy" id="34305"/>
    <lineage>
        <taxon>Eukaryota</taxon>
        <taxon>Viridiplantae</taxon>
        <taxon>Streptophyta</taxon>
        <taxon>Embryophyta</taxon>
        <taxon>Tracheophyta</taxon>
        <taxon>Spermatophyta</taxon>
        <taxon>Magnoliopsida</taxon>
        <taxon>eudicotyledons</taxon>
        <taxon>Gunneridae</taxon>
        <taxon>Pentapetalae</taxon>
        <taxon>rosids</taxon>
        <taxon>fabids</taxon>
        <taxon>Fabales</taxon>
        <taxon>Fabaceae</taxon>
        <taxon>Papilionoideae</taxon>
        <taxon>50 kb inversion clade</taxon>
        <taxon>NPAAA clade</taxon>
        <taxon>Hologalegina</taxon>
        <taxon>robinioid clade</taxon>
        <taxon>Loteae</taxon>
        <taxon>Lotus</taxon>
    </lineage>
</organism>
<comment type="function">
    <text evidence="1">NDH shuttles electrons from NAD(P)H:plastoquinone, via FMN and iron-sulfur (Fe-S) centers, to quinones in the photosynthetic chain and possibly in a chloroplast respiratory chain. The immediate electron acceptor for the enzyme in this species is believed to be plastoquinone. Couples the redox reaction to proton translocation, and thus conserves the redox energy in a proton gradient.</text>
</comment>
<comment type="catalytic activity">
    <reaction evidence="1">
        <text>a plastoquinone + NADH + (n+1) H(+)(in) = a plastoquinol + NAD(+) + n H(+)(out)</text>
        <dbReference type="Rhea" id="RHEA:42608"/>
        <dbReference type="Rhea" id="RHEA-COMP:9561"/>
        <dbReference type="Rhea" id="RHEA-COMP:9562"/>
        <dbReference type="ChEBI" id="CHEBI:15378"/>
        <dbReference type="ChEBI" id="CHEBI:17757"/>
        <dbReference type="ChEBI" id="CHEBI:57540"/>
        <dbReference type="ChEBI" id="CHEBI:57945"/>
        <dbReference type="ChEBI" id="CHEBI:62192"/>
    </reaction>
</comment>
<comment type="catalytic activity">
    <reaction evidence="1">
        <text>a plastoquinone + NADPH + (n+1) H(+)(in) = a plastoquinol + NADP(+) + n H(+)(out)</text>
        <dbReference type="Rhea" id="RHEA:42612"/>
        <dbReference type="Rhea" id="RHEA-COMP:9561"/>
        <dbReference type="Rhea" id="RHEA-COMP:9562"/>
        <dbReference type="ChEBI" id="CHEBI:15378"/>
        <dbReference type="ChEBI" id="CHEBI:17757"/>
        <dbReference type="ChEBI" id="CHEBI:57783"/>
        <dbReference type="ChEBI" id="CHEBI:58349"/>
        <dbReference type="ChEBI" id="CHEBI:62192"/>
    </reaction>
</comment>
<comment type="subunit">
    <text evidence="1">NDH is composed of at least 16 different subunits, 5 of which are encoded in the nucleus.</text>
</comment>
<comment type="subcellular location">
    <subcellularLocation>
        <location evidence="1">Plastid</location>
        <location evidence="1">Chloroplast thylakoid membrane</location>
        <topology evidence="1">Peripheral membrane protein</topology>
        <orientation evidence="1">Stromal side</orientation>
    </subcellularLocation>
</comment>
<comment type="similarity">
    <text evidence="1">Belongs to the complex I 49 kDa subunit family.</text>
</comment>